<protein>
    <recommendedName>
        <fullName>Probable nitronate monooxygenase</fullName>
        <shortName>NMO</shortName>
        <ecNumber evidence="2">1.13.12.-</ecNumber>
    </recommendedName>
    <alternativeName>
        <fullName>Propionate 3-nitronate monooxygenase</fullName>
        <shortName>P3N monooxygenase</shortName>
    </alternativeName>
</protein>
<organism>
    <name type="scientific">Staphylococcus aureus (strain Newman)</name>
    <dbReference type="NCBI Taxonomy" id="426430"/>
    <lineage>
        <taxon>Bacteria</taxon>
        <taxon>Bacillati</taxon>
        <taxon>Bacillota</taxon>
        <taxon>Bacilli</taxon>
        <taxon>Bacillales</taxon>
        <taxon>Staphylococcaceae</taxon>
        <taxon>Staphylococcus</taxon>
    </lineage>
</organism>
<accession>A6QFD2</accession>
<keyword id="KW-0216">Detoxification</keyword>
<keyword id="KW-0285">Flavoprotein</keyword>
<keyword id="KW-0288">FMN</keyword>
<keyword id="KW-0503">Monooxygenase</keyword>
<keyword id="KW-0547">Nucleotide-binding</keyword>
<keyword id="KW-0560">Oxidoreductase</keyword>
<reference key="1">
    <citation type="journal article" date="2008" name="J. Bacteriol.">
        <title>Genome sequence of Staphylococcus aureus strain Newman and comparative analysis of staphylococcal genomes: polymorphism and evolution of two major pathogenicity islands.</title>
        <authorList>
            <person name="Baba T."/>
            <person name="Bae T."/>
            <person name="Schneewind O."/>
            <person name="Takeuchi F."/>
            <person name="Hiramatsu K."/>
        </authorList>
    </citation>
    <scope>NUCLEOTIDE SEQUENCE [LARGE SCALE GENOMIC DNA]</scope>
    <source>
        <strain>Newman</strain>
    </source>
</reference>
<feature type="chain" id="PRO_0000360899" description="Probable nitronate monooxygenase">
    <location>
        <begin position="1"/>
        <end position="355"/>
    </location>
</feature>
<feature type="binding site" evidence="2">
    <location>
        <position position="71"/>
    </location>
    <ligand>
        <name>FMN</name>
        <dbReference type="ChEBI" id="CHEBI:58210"/>
    </ligand>
</feature>
<feature type="binding site" evidence="2">
    <location>
        <position position="175"/>
    </location>
    <ligand>
        <name>FMN</name>
        <dbReference type="ChEBI" id="CHEBI:58210"/>
    </ligand>
</feature>
<feature type="binding site" evidence="2">
    <location>
        <position position="180"/>
    </location>
    <ligand>
        <name>FMN</name>
        <dbReference type="ChEBI" id="CHEBI:58210"/>
    </ligand>
</feature>
<feature type="binding site" evidence="2">
    <location>
        <position position="218"/>
    </location>
    <ligand>
        <name>FMN</name>
        <dbReference type="ChEBI" id="CHEBI:58210"/>
    </ligand>
</feature>
<feature type="binding site" evidence="2">
    <location>
        <begin position="237"/>
        <end position="240"/>
    </location>
    <ligand>
        <name>FMN</name>
        <dbReference type="ChEBI" id="CHEBI:58210"/>
    </ligand>
</feature>
<comment type="function">
    <text evidence="2">Nitronate monooxygenase that uses molecular oxygen to catalyze the oxidative denitrification of alkyl nitronates. Acts on propionate 3-nitronate (P3N), the presumed physiological substrate. Probably functions in the detoxification of P3N, a metabolic poison produced by plants and fungi as a defense mechanism.</text>
</comment>
<comment type="catalytic activity">
    <reaction evidence="1">
        <text>3 propionate 3-nitronate + 3 O2 + H2O = 3 3-oxopropanoate + 2 nitrate + nitrite + H2O2 + 3 H(+)</text>
        <dbReference type="Rhea" id="RHEA:57332"/>
        <dbReference type="ChEBI" id="CHEBI:15377"/>
        <dbReference type="ChEBI" id="CHEBI:15378"/>
        <dbReference type="ChEBI" id="CHEBI:15379"/>
        <dbReference type="ChEBI" id="CHEBI:16240"/>
        <dbReference type="ChEBI" id="CHEBI:16301"/>
        <dbReference type="ChEBI" id="CHEBI:17632"/>
        <dbReference type="ChEBI" id="CHEBI:33190"/>
        <dbReference type="ChEBI" id="CHEBI:136067"/>
    </reaction>
</comment>
<comment type="cofactor">
    <cofactor evidence="2">
        <name>FMN</name>
        <dbReference type="ChEBI" id="CHEBI:58210"/>
    </cofactor>
    <text evidence="2">Binds 1 FMN per subunit.</text>
</comment>
<comment type="miscellaneous">
    <text evidence="3">P3N is a potent irreversible inhibitor of the key enzyme succinate dehydrogenase in the Krebs cycle and electron transport chain. P3N has been shown to be a toxic metabolite to bacteria, plants, fungi, mammals or any organism that uses succinate dehydrogenase.</text>
</comment>
<comment type="similarity">
    <text evidence="3">Belongs to the nitronate monooxygenase family. NMO class I subfamily.</text>
</comment>
<proteinExistence type="inferred from homology"/>
<gene>
    <name type="ordered locus">NWMN_0792</name>
</gene>
<name>NMO_STAAE</name>
<dbReference type="EC" id="1.13.12.-" evidence="2"/>
<dbReference type="EMBL" id="AP009351">
    <property type="protein sequence ID" value="BAF67064.1"/>
    <property type="molecule type" value="Genomic_DNA"/>
</dbReference>
<dbReference type="RefSeq" id="WP_000267247.1">
    <property type="nucleotide sequence ID" value="NZ_JBBIAE010000002.1"/>
</dbReference>
<dbReference type="SMR" id="A6QFD2"/>
<dbReference type="KEGG" id="sae:NWMN_0792"/>
<dbReference type="HOGENOM" id="CLU_038732_5_1_9"/>
<dbReference type="Proteomes" id="UP000006386">
    <property type="component" value="Chromosome"/>
</dbReference>
<dbReference type="GO" id="GO:0018580">
    <property type="term" value="F:nitronate monooxygenase activity"/>
    <property type="evidence" value="ECO:0007669"/>
    <property type="project" value="InterPro"/>
</dbReference>
<dbReference type="GO" id="GO:0000166">
    <property type="term" value="F:nucleotide binding"/>
    <property type="evidence" value="ECO:0007669"/>
    <property type="project" value="UniProtKB-KW"/>
</dbReference>
<dbReference type="GO" id="GO:0009636">
    <property type="term" value="P:response to toxic substance"/>
    <property type="evidence" value="ECO:0007669"/>
    <property type="project" value="UniProtKB-KW"/>
</dbReference>
<dbReference type="CDD" id="cd04730">
    <property type="entry name" value="NPD_like"/>
    <property type="match status" value="1"/>
</dbReference>
<dbReference type="FunFam" id="3.20.20.70:FF:000154">
    <property type="entry name" value="Probable nitronate monooxygenase"/>
    <property type="match status" value="1"/>
</dbReference>
<dbReference type="Gene3D" id="3.20.20.70">
    <property type="entry name" value="Aldolase class I"/>
    <property type="match status" value="1"/>
</dbReference>
<dbReference type="InterPro" id="IPR013785">
    <property type="entry name" value="Aldolase_TIM"/>
</dbReference>
<dbReference type="InterPro" id="IPR004136">
    <property type="entry name" value="NMO"/>
</dbReference>
<dbReference type="PANTHER" id="PTHR42747">
    <property type="entry name" value="NITRONATE MONOOXYGENASE-RELATED"/>
    <property type="match status" value="1"/>
</dbReference>
<dbReference type="PANTHER" id="PTHR42747:SF3">
    <property type="entry name" value="NITRONATE MONOOXYGENASE-RELATED"/>
    <property type="match status" value="1"/>
</dbReference>
<dbReference type="Pfam" id="PF03060">
    <property type="entry name" value="NMO"/>
    <property type="match status" value="1"/>
</dbReference>
<dbReference type="SUPFAM" id="SSF51412">
    <property type="entry name" value="Inosine monophosphate dehydrogenase (IMPDH)"/>
    <property type="match status" value="1"/>
</dbReference>
<sequence>MWNKNRLTQMLSIEYPIIQAGMAGSTTPKLVASVSNSGGLGTIGAGYFNTQQLEDEIDYVRQLTSNSFGVNVFVPSQQSYTSSQIENMNAWLKPYRRALHLEEPVVKITEEQQFKCHIDTIIKKQVPVCCFTFGIPSEQIISRLKAANVKLIGTATSVDEAIANEKAGMDAIVAQGSEAGGHRGSFLKPKNQLPMVGTISLVPQIVDVVSIPVIAAGGIMDGRGVLASIVLGAEGVQMGTAFLTSQDSNASELLRDAIINSKETDTVITKAFSGKLARGINNRFIEEMSQYEGDIPDYPIQNELTSSIRKAAANIGDKELIHMWSGQSPRLATTHPANTIMSNIINQINQIMQYK</sequence>
<evidence type="ECO:0000250" key="1">
    <source>
        <dbReference type="UniProtKB" id="D0V3Y4"/>
    </source>
</evidence>
<evidence type="ECO:0000250" key="2">
    <source>
        <dbReference type="UniProtKB" id="Q9HWH9"/>
    </source>
</evidence>
<evidence type="ECO:0000305" key="3"/>